<comment type="function">
    <text evidence="1">Catalyzes the amidotransfer (transamidation) of the octanoyl moiety from octanoyl-GcvH to the lipoyl domain of the E2 subunit of lipoate-dependent enzymes.</text>
</comment>
<comment type="catalytic activity">
    <reaction evidence="1">
        <text>N(6)-octanoyl-L-lysyl-[glycine-cleavage complex H protein] + L-lysyl-[lipoyl-carrier protein] = N(6)-octanoyl-L-lysyl-[lipoyl-carrier protein] + L-lysyl-[glycine-cleavage complex H protein]</text>
        <dbReference type="Rhea" id="RHEA:20213"/>
        <dbReference type="Rhea" id="RHEA-COMP:10500"/>
        <dbReference type="Rhea" id="RHEA-COMP:10501"/>
        <dbReference type="Rhea" id="RHEA-COMP:10503"/>
        <dbReference type="Rhea" id="RHEA-COMP:10504"/>
        <dbReference type="ChEBI" id="CHEBI:29969"/>
        <dbReference type="ChEBI" id="CHEBI:78809"/>
        <dbReference type="EC" id="2.3.1.204"/>
    </reaction>
</comment>
<comment type="pathway">
    <text evidence="1">Protein modification; protein lipoylation via endogenous pathway; protein N(6)-(lipoyl)lysine from octanoyl-[acyl-carrier-protein].</text>
</comment>
<comment type="miscellaneous">
    <text evidence="1">The reaction proceeds via a thioester-linked acyl-enzyme intermediate.</text>
</comment>
<comment type="similarity">
    <text evidence="1">Belongs to the octanoyltransferase LipL family.</text>
</comment>
<protein>
    <recommendedName>
        <fullName evidence="1">Octanoyl-[GcvH]:protein N-octanoyltransferase</fullName>
        <ecNumber evidence="1">2.3.1.204</ecNumber>
    </recommendedName>
    <alternativeName>
        <fullName evidence="1">Octanoyl-[GcvH]:E2 amidotransferase</fullName>
    </alternativeName>
</protein>
<organism>
    <name type="scientific">Lysinibacillus sphaericus (strain C3-41)</name>
    <dbReference type="NCBI Taxonomy" id="444177"/>
    <lineage>
        <taxon>Bacteria</taxon>
        <taxon>Bacillati</taxon>
        <taxon>Bacillota</taxon>
        <taxon>Bacilli</taxon>
        <taxon>Bacillales</taxon>
        <taxon>Bacillaceae</taxon>
        <taxon>Lysinibacillus</taxon>
    </lineage>
</organism>
<dbReference type="EC" id="2.3.1.204" evidence="1"/>
<dbReference type="EMBL" id="CP000817">
    <property type="protein sequence ID" value="ACA38560.1"/>
    <property type="molecule type" value="Genomic_DNA"/>
</dbReference>
<dbReference type="RefSeq" id="WP_012292704.1">
    <property type="nucleotide sequence ID" value="NC_010382.1"/>
</dbReference>
<dbReference type="SMR" id="B1I022"/>
<dbReference type="EnsemblBacteria" id="ACA38560">
    <property type="protein sequence ID" value="ACA38560"/>
    <property type="gene ID" value="Bsph_0948"/>
</dbReference>
<dbReference type="KEGG" id="lsp:Bsph_0948"/>
<dbReference type="HOGENOM" id="CLU_067270_0_0_9"/>
<dbReference type="Proteomes" id="UP000002164">
    <property type="component" value="Chromosome"/>
</dbReference>
<dbReference type="GO" id="GO:0033819">
    <property type="term" value="F:lipoyl(octanoyl) transferase activity"/>
    <property type="evidence" value="ECO:0007669"/>
    <property type="project" value="InterPro"/>
</dbReference>
<dbReference type="GO" id="GO:0009107">
    <property type="term" value="P:lipoate biosynthetic process"/>
    <property type="evidence" value="ECO:0007669"/>
    <property type="project" value="UniProtKB-UniRule"/>
</dbReference>
<dbReference type="GO" id="GO:0036211">
    <property type="term" value="P:protein modification process"/>
    <property type="evidence" value="ECO:0007669"/>
    <property type="project" value="InterPro"/>
</dbReference>
<dbReference type="CDD" id="cd16443">
    <property type="entry name" value="LplA"/>
    <property type="match status" value="1"/>
</dbReference>
<dbReference type="Gene3D" id="3.30.930.10">
    <property type="entry name" value="Bira Bifunctional Protein, Domain 2"/>
    <property type="match status" value="1"/>
</dbReference>
<dbReference type="HAMAP" id="MF_02119">
    <property type="entry name" value="LipL"/>
    <property type="match status" value="1"/>
</dbReference>
<dbReference type="InterPro" id="IPR045864">
    <property type="entry name" value="aa-tRNA-synth_II/BPL/LPL"/>
</dbReference>
<dbReference type="InterPro" id="IPR004143">
    <property type="entry name" value="BPL_LPL_catalytic"/>
</dbReference>
<dbReference type="InterPro" id="IPR024897">
    <property type="entry name" value="LipL"/>
</dbReference>
<dbReference type="InterPro" id="IPR050664">
    <property type="entry name" value="Octanoyltrans_LipM/LipL"/>
</dbReference>
<dbReference type="PANTHER" id="PTHR43679:SF2">
    <property type="entry name" value="OCTANOYL-[GCVH]:PROTEIN N-OCTANOYLTRANSFERASE"/>
    <property type="match status" value="1"/>
</dbReference>
<dbReference type="PANTHER" id="PTHR43679">
    <property type="entry name" value="OCTANOYLTRANSFERASE LIPM-RELATED"/>
    <property type="match status" value="1"/>
</dbReference>
<dbReference type="Pfam" id="PF21948">
    <property type="entry name" value="LplA-B_cat"/>
    <property type="match status" value="1"/>
</dbReference>
<dbReference type="SUPFAM" id="SSF55681">
    <property type="entry name" value="Class II aaRS and biotin synthetases"/>
    <property type="match status" value="1"/>
</dbReference>
<dbReference type="PROSITE" id="PS51733">
    <property type="entry name" value="BPL_LPL_CATALYTIC"/>
    <property type="match status" value="1"/>
</dbReference>
<keyword id="KW-0012">Acyltransferase</keyword>
<keyword id="KW-0808">Transferase</keyword>
<name>LIPL_LYSSC</name>
<proteinExistence type="inferred from homology"/>
<evidence type="ECO:0000255" key="1">
    <source>
        <dbReference type="HAMAP-Rule" id="MF_02119"/>
    </source>
</evidence>
<evidence type="ECO:0000255" key="2">
    <source>
        <dbReference type="PROSITE-ProRule" id="PRU01067"/>
    </source>
</evidence>
<reference key="1">
    <citation type="journal article" date="2008" name="J. Bacteriol.">
        <title>Complete genome sequence of the mosquitocidal bacterium Bacillus sphaericus C3-41 and comparison with those of closely related Bacillus species.</title>
        <authorList>
            <person name="Hu X."/>
            <person name="Fan W."/>
            <person name="Han B."/>
            <person name="Liu H."/>
            <person name="Zheng D."/>
            <person name="Li Q."/>
            <person name="Dong W."/>
            <person name="Yan J."/>
            <person name="Gao M."/>
            <person name="Berry C."/>
            <person name="Yuan Z."/>
        </authorList>
    </citation>
    <scope>NUCLEOTIDE SEQUENCE [LARGE SCALE GENOMIC DNA]</scope>
    <source>
        <strain>C3-41</strain>
    </source>
</reference>
<sequence>MKSILQQPIWRYYDQSISAKQRSPLESFATDDTLCQLVGQLVSPPTIRTWVHEASVVLGIQDHRLPYVQQGMDLLESRGYQPIVRNSGGLAVVLDEGILNISIVLSEQMDSLSINDGYDVMVDLVKGLFPEVAEKIEAYEIVGSYCPGSYDLSIEGKKFAGISQRRLRQGVAVQIYLCIEGSGSQRAALIRDFYEESLQQEETKFNYPQIVPEVMASLSELVDLHLTVEGVVIRLQQLLHRLAGEVHPESFHDEELTLYGFYLKRVFERNAKMLERHE</sequence>
<accession>B1I022</accession>
<gene>
    <name evidence="1" type="primary">lipL</name>
    <name type="ordered locus">Bsph_0948</name>
</gene>
<feature type="chain" id="PRO_0000410842" description="Octanoyl-[GcvH]:protein N-octanoyltransferase">
    <location>
        <begin position="1"/>
        <end position="278"/>
    </location>
</feature>
<feature type="domain" description="BPL/LPL catalytic" evidence="2">
    <location>
        <begin position="41"/>
        <end position="247"/>
    </location>
</feature>
<feature type="active site" description="Acyl-thioester intermediate" evidence="1">
    <location>
        <position position="146"/>
    </location>
</feature>
<feature type="site" description="Lowers pKa of active site Cys" evidence="1">
    <location>
        <position position="158"/>
    </location>
</feature>